<sequence>MARPDLTARLHAQRALRDAQGRRRTRRTVTRRDGVRLEVDGQWLTGFCSNDYLGLAQQFSVVNALQDAAAREGAGAGASHLVCGHHAMHEALEREVAEWLGYPRALLFGSGFAANLAVQQALLSEENDVCVQDKLNHASLLDATRLAGARLRRYPHLDTEGAMRQLKHAPDGAAMLATDGVFSMDGDIAPLRALSLVARLQQALFYVDDAHGVGVVGDGRGAVAAAGLSVDDVPLQLVTLGKALGGSGALVLGRDDLIEHLAETARPYIYTTAVPPAMAAAALEAVRLARRDHWRRTKLTDLIALFRSEARRHGLDLMASETPIQPLLCGDDHTAVAMSTALEQAGWLVGAIRPPTVPEGKARLRVTLSALHTPEQVRGLVEAIANARDRVTLAVREAAPPPLPAFA</sequence>
<comment type="function">
    <text evidence="1">Catalyzes the decarboxylative condensation of pimeloyl-[acyl-carrier protein] and L-alanine to produce 8-amino-7-oxononanoate (AON), [acyl-carrier protein], and carbon dioxide.</text>
</comment>
<comment type="catalytic activity">
    <reaction evidence="1">
        <text>6-carboxyhexanoyl-[ACP] + L-alanine + H(+) = (8S)-8-amino-7-oxononanoate + holo-[ACP] + CO2</text>
        <dbReference type="Rhea" id="RHEA:42288"/>
        <dbReference type="Rhea" id="RHEA-COMP:9685"/>
        <dbReference type="Rhea" id="RHEA-COMP:9955"/>
        <dbReference type="ChEBI" id="CHEBI:15378"/>
        <dbReference type="ChEBI" id="CHEBI:16526"/>
        <dbReference type="ChEBI" id="CHEBI:57972"/>
        <dbReference type="ChEBI" id="CHEBI:64479"/>
        <dbReference type="ChEBI" id="CHEBI:78846"/>
        <dbReference type="ChEBI" id="CHEBI:149468"/>
        <dbReference type="EC" id="2.3.1.47"/>
    </reaction>
</comment>
<comment type="cofactor">
    <cofactor evidence="1">
        <name>pyridoxal 5'-phosphate</name>
        <dbReference type="ChEBI" id="CHEBI:597326"/>
    </cofactor>
</comment>
<comment type="pathway">
    <text evidence="1">Cofactor biosynthesis; biotin biosynthesis.</text>
</comment>
<comment type="subunit">
    <text evidence="1">Homodimer.</text>
</comment>
<comment type="similarity">
    <text evidence="1">Belongs to the class-II pyridoxal-phosphate-dependent aminotransferase family. BioF subfamily.</text>
</comment>
<name>BIOF_STRM5</name>
<evidence type="ECO:0000255" key="1">
    <source>
        <dbReference type="HAMAP-Rule" id="MF_01693"/>
    </source>
</evidence>
<accession>B4SM82</accession>
<feature type="chain" id="PRO_0000381115" description="8-amino-7-oxononanoate synthase">
    <location>
        <begin position="1"/>
        <end position="407"/>
    </location>
</feature>
<feature type="binding site" evidence="1">
    <location>
        <position position="24"/>
    </location>
    <ligand>
        <name>substrate</name>
    </ligand>
</feature>
<feature type="binding site" evidence="1">
    <location>
        <begin position="111"/>
        <end position="112"/>
    </location>
    <ligand>
        <name>pyridoxal 5'-phosphate</name>
        <dbReference type="ChEBI" id="CHEBI:597326"/>
    </ligand>
</feature>
<feature type="binding site" evidence="1">
    <location>
        <position position="137"/>
    </location>
    <ligand>
        <name>substrate</name>
    </ligand>
</feature>
<feature type="binding site" evidence="1">
    <location>
        <position position="183"/>
    </location>
    <ligand>
        <name>pyridoxal 5'-phosphate</name>
        <dbReference type="ChEBI" id="CHEBI:597326"/>
    </ligand>
</feature>
<feature type="binding site" evidence="1">
    <location>
        <position position="211"/>
    </location>
    <ligand>
        <name>pyridoxal 5'-phosphate</name>
        <dbReference type="ChEBI" id="CHEBI:597326"/>
    </ligand>
</feature>
<feature type="binding site" evidence="1">
    <location>
        <position position="239"/>
    </location>
    <ligand>
        <name>pyridoxal 5'-phosphate</name>
        <dbReference type="ChEBI" id="CHEBI:597326"/>
    </ligand>
</feature>
<feature type="binding site" evidence="1">
    <location>
        <position position="356"/>
    </location>
    <ligand>
        <name>substrate</name>
    </ligand>
</feature>
<feature type="modified residue" description="N6-(pyridoxal phosphate)lysine" evidence="1">
    <location>
        <position position="242"/>
    </location>
</feature>
<proteinExistence type="inferred from homology"/>
<keyword id="KW-0093">Biotin biosynthesis</keyword>
<keyword id="KW-0663">Pyridoxal phosphate</keyword>
<keyword id="KW-0808">Transferase</keyword>
<dbReference type="EC" id="2.3.1.47" evidence="1"/>
<dbReference type="EMBL" id="CP001111">
    <property type="protein sequence ID" value="ACF53527.1"/>
    <property type="molecule type" value="Genomic_DNA"/>
</dbReference>
<dbReference type="RefSeq" id="WP_012512399.1">
    <property type="nucleotide sequence ID" value="NC_011071.1"/>
</dbReference>
<dbReference type="SMR" id="B4SM82"/>
<dbReference type="STRING" id="391008.Smal_3828"/>
<dbReference type="KEGG" id="smt:Smal_3828"/>
<dbReference type="eggNOG" id="COG0156">
    <property type="taxonomic scope" value="Bacteria"/>
</dbReference>
<dbReference type="HOGENOM" id="CLU_015846_11_2_6"/>
<dbReference type="OrthoDB" id="9807157at2"/>
<dbReference type="UniPathway" id="UPA00078"/>
<dbReference type="Proteomes" id="UP000001867">
    <property type="component" value="Chromosome"/>
</dbReference>
<dbReference type="GO" id="GO:0008710">
    <property type="term" value="F:8-amino-7-oxononanoate synthase activity"/>
    <property type="evidence" value="ECO:0007669"/>
    <property type="project" value="UniProtKB-UniRule"/>
</dbReference>
<dbReference type="GO" id="GO:0030170">
    <property type="term" value="F:pyridoxal phosphate binding"/>
    <property type="evidence" value="ECO:0007669"/>
    <property type="project" value="UniProtKB-UniRule"/>
</dbReference>
<dbReference type="GO" id="GO:0009102">
    <property type="term" value="P:biotin biosynthetic process"/>
    <property type="evidence" value="ECO:0007669"/>
    <property type="project" value="UniProtKB-UniRule"/>
</dbReference>
<dbReference type="Gene3D" id="3.90.1150.10">
    <property type="entry name" value="Aspartate Aminotransferase, domain 1"/>
    <property type="match status" value="1"/>
</dbReference>
<dbReference type="Gene3D" id="3.40.640.10">
    <property type="entry name" value="Type I PLP-dependent aspartate aminotransferase-like (Major domain)"/>
    <property type="match status" value="1"/>
</dbReference>
<dbReference type="HAMAP" id="MF_01693">
    <property type="entry name" value="BioF_aminotrans_2"/>
    <property type="match status" value="1"/>
</dbReference>
<dbReference type="InterPro" id="IPR004839">
    <property type="entry name" value="Aminotransferase_I/II_large"/>
</dbReference>
<dbReference type="InterPro" id="IPR050087">
    <property type="entry name" value="AON_synthase_class-II"/>
</dbReference>
<dbReference type="InterPro" id="IPR004723">
    <property type="entry name" value="AONS_Archaea/Proteobacteria"/>
</dbReference>
<dbReference type="InterPro" id="IPR022834">
    <property type="entry name" value="AONS_Proteobacteria"/>
</dbReference>
<dbReference type="InterPro" id="IPR015424">
    <property type="entry name" value="PyrdxlP-dep_Trfase"/>
</dbReference>
<dbReference type="InterPro" id="IPR015421">
    <property type="entry name" value="PyrdxlP-dep_Trfase_major"/>
</dbReference>
<dbReference type="InterPro" id="IPR015422">
    <property type="entry name" value="PyrdxlP-dep_Trfase_small"/>
</dbReference>
<dbReference type="NCBIfam" id="TIGR00858">
    <property type="entry name" value="bioF"/>
    <property type="match status" value="1"/>
</dbReference>
<dbReference type="PANTHER" id="PTHR13693:SF100">
    <property type="entry name" value="8-AMINO-7-OXONONANOATE SYNTHASE"/>
    <property type="match status" value="1"/>
</dbReference>
<dbReference type="PANTHER" id="PTHR13693">
    <property type="entry name" value="CLASS II AMINOTRANSFERASE/8-AMINO-7-OXONONANOATE SYNTHASE"/>
    <property type="match status" value="1"/>
</dbReference>
<dbReference type="Pfam" id="PF00155">
    <property type="entry name" value="Aminotran_1_2"/>
    <property type="match status" value="1"/>
</dbReference>
<dbReference type="SUPFAM" id="SSF53383">
    <property type="entry name" value="PLP-dependent transferases"/>
    <property type="match status" value="1"/>
</dbReference>
<dbReference type="PROSITE" id="PS00599">
    <property type="entry name" value="AA_TRANSFER_CLASS_2"/>
    <property type="match status" value="1"/>
</dbReference>
<organism>
    <name type="scientific">Stenotrophomonas maltophilia (strain R551-3)</name>
    <dbReference type="NCBI Taxonomy" id="391008"/>
    <lineage>
        <taxon>Bacteria</taxon>
        <taxon>Pseudomonadati</taxon>
        <taxon>Pseudomonadota</taxon>
        <taxon>Gammaproteobacteria</taxon>
        <taxon>Lysobacterales</taxon>
        <taxon>Lysobacteraceae</taxon>
        <taxon>Stenotrophomonas</taxon>
        <taxon>Stenotrophomonas maltophilia group</taxon>
    </lineage>
</organism>
<reference key="1">
    <citation type="submission" date="2008-06" db="EMBL/GenBank/DDBJ databases">
        <title>Complete sequence of Stenotrophomonas maltophilia R551-3.</title>
        <authorList>
            <consortium name="US DOE Joint Genome Institute"/>
            <person name="Lucas S."/>
            <person name="Copeland A."/>
            <person name="Lapidus A."/>
            <person name="Glavina del Rio T."/>
            <person name="Dalin E."/>
            <person name="Tice H."/>
            <person name="Pitluck S."/>
            <person name="Chain P."/>
            <person name="Malfatti S."/>
            <person name="Shin M."/>
            <person name="Vergez L."/>
            <person name="Lang D."/>
            <person name="Schmutz J."/>
            <person name="Larimer F."/>
            <person name="Land M."/>
            <person name="Hauser L."/>
            <person name="Kyrpides N."/>
            <person name="Mikhailova N."/>
            <person name="Taghavi S."/>
            <person name="Monchy S."/>
            <person name="Newman L."/>
            <person name="Vangronsveld J."/>
            <person name="van der Lelie D."/>
            <person name="Richardson P."/>
        </authorList>
    </citation>
    <scope>NUCLEOTIDE SEQUENCE [LARGE SCALE GENOMIC DNA]</scope>
    <source>
        <strain>R551-3</strain>
    </source>
</reference>
<gene>
    <name evidence="1" type="primary">bioF</name>
    <name type="ordered locus">Smal_3828</name>
</gene>
<protein>
    <recommendedName>
        <fullName evidence="1">8-amino-7-oxononanoate synthase</fullName>
        <shortName evidence="1">AONS</shortName>
        <ecNumber evidence="1">2.3.1.47</ecNumber>
    </recommendedName>
    <alternativeName>
        <fullName evidence="1">7-keto-8-amino-pelargonic acid synthase</fullName>
        <shortName evidence="1">7-KAP synthase</shortName>
        <shortName evidence="1">KAPA synthase</shortName>
    </alternativeName>
    <alternativeName>
        <fullName evidence="1">8-amino-7-ketopelargonate synthase</fullName>
    </alternativeName>
</protein>